<evidence type="ECO:0000255" key="1"/>
<evidence type="ECO:0000305" key="2"/>
<feature type="signal peptide" evidence="1">
    <location>
        <begin position="1"/>
        <end position="24"/>
    </location>
</feature>
<feature type="chain" id="PRO_0000022045" description="Phosphoglycerate transport regulatory protein PgtC">
    <location>
        <begin position="25"/>
        <end position="397"/>
    </location>
</feature>
<feature type="transmembrane region" description="Helical" evidence="1">
    <location>
        <begin position="102"/>
        <end position="117"/>
    </location>
</feature>
<feature type="sequence conflict" description="In Ref. 1; AAA68214." evidence="2" ref="1">
    <original>T</original>
    <variation>S</variation>
    <location>
        <position position="45"/>
    </location>
</feature>
<comment type="function">
    <text>Required for PgtP expression, it may act jointly with the PgtA/PgtB signaling proteins.</text>
</comment>
<comment type="subcellular location">
    <subcellularLocation>
        <location evidence="2">Cell membrane</location>
        <topology evidence="2">Single-pass membrane protein</topology>
    </subcellularLocation>
</comment>
<comment type="sequence caution" evidence="2">
    <conflict type="frameshift">
        <sequence resource="EMBL-CDS" id="AAA68214"/>
    </conflict>
</comment>
<sequence length="397" mass="44016">MFGSCQAYSRELVMATTFSPSATAWIIQRWQTEPGSVMIRTLNRTSGSLEQLLDTANAENVDLILTSSPMLLQHLQEHQKLALLDSAPAASQKLVPRSIRSTSVAVAVSGFGLLINRSALAARHLPPPADWQDMGLPSYQGALLMSSPSRSDTNHLMVESLLQQKGWTAGWATLLAISGNLVTISSRSFGVADKIKSGLGVAGPVIDNYANLLLNDPNLAFTYFPYSAVSPTYVAVLKNSRHADEARAFIHYLLSPKGQRILADANTGKYPVAPLSADNPRAAQQQRLMAQPPLNYRLILKRQQLVQRMFDTAISFRLAQLKDAWRALHSAETRLKRPLPEIRALLTSVPVDAASSEDETWLAQFDNKSFAEQKMMEWQIWFLNNQRLAIHKLEELK</sequence>
<accession>P0A233</accession>
<accession>P37591</accession>
<keyword id="KW-1003">Cell membrane</keyword>
<keyword id="KW-0472">Membrane</keyword>
<keyword id="KW-1185">Reference proteome</keyword>
<keyword id="KW-0732">Signal</keyword>
<keyword id="KW-0812">Transmembrane</keyword>
<keyword id="KW-1133">Transmembrane helix</keyword>
<name>PGTC_SALTY</name>
<organism>
    <name type="scientific">Salmonella typhimurium (strain LT2 / SGSC1412 / ATCC 700720)</name>
    <dbReference type="NCBI Taxonomy" id="99287"/>
    <lineage>
        <taxon>Bacteria</taxon>
        <taxon>Pseudomonadati</taxon>
        <taxon>Pseudomonadota</taxon>
        <taxon>Gammaproteobacteria</taxon>
        <taxon>Enterobacterales</taxon>
        <taxon>Enterobacteriaceae</taxon>
        <taxon>Salmonella</taxon>
    </lineage>
</organism>
<protein>
    <recommendedName>
        <fullName>Phosphoglycerate transport regulatory protein PgtC</fullName>
    </recommendedName>
</protein>
<proteinExistence type="evidence at protein level"/>
<gene>
    <name type="primary">pgtC</name>
    <name type="ordered locus">STM2398</name>
</gene>
<reference key="1">
    <citation type="journal article" date="1988" name="J. Bacteriol.">
        <title>Identification of the products and nucleotide sequences of two regulatory genes involved in the exogenous induction of phosphoglycerate transport in Salmonella typhimurium.</title>
        <authorList>
            <person name="Yang Y.L."/>
            <person name="Goldrick D."/>
            <person name="Hong J.-S."/>
        </authorList>
    </citation>
    <scope>NUCLEOTIDE SEQUENCE [GENOMIC DNA]</scope>
    <source>
        <strain>LT2</strain>
    </source>
</reference>
<reference key="2">
    <citation type="journal article" date="2001" name="Nature">
        <title>Complete genome sequence of Salmonella enterica serovar Typhimurium LT2.</title>
        <authorList>
            <person name="McClelland M."/>
            <person name="Sanderson K.E."/>
            <person name="Spieth J."/>
            <person name="Clifton S.W."/>
            <person name="Latreille P."/>
            <person name="Courtney L."/>
            <person name="Porwollik S."/>
            <person name="Ali J."/>
            <person name="Dante M."/>
            <person name="Du F."/>
            <person name="Hou S."/>
            <person name="Layman D."/>
            <person name="Leonard S."/>
            <person name="Nguyen C."/>
            <person name="Scott K."/>
            <person name="Holmes A."/>
            <person name="Grewal N."/>
            <person name="Mulvaney E."/>
            <person name="Ryan E."/>
            <person name="Sun H."/>
            <person name="Florea L."/>
            <person name="Miller W."/>
            <person name="Stoneking T."/>
            <person name="Nhan M."/>
            <person name="Waterston R."/>
            <person name="Wilson R.K."/>
        </authorList>
    </citation>
    <scope>NUCLEOTIDE SEQUENCE [LARGE SCALE GENOMIC DNA]</scope>
    <source>
        <strain>LT2 / SGSC1412 / ATCC 700720</strain>
    </source>
</reference>
<reference key="3">
    <citation type="journal article" date="1988" name="J. Bacteriol.">
        <title>Genetic evidence for modulation of the activator by two regulatory proteins involved in the exogenous induction of phosphoglycerate transport in Salmonella typhimurium.</title>
        <authorList>
            <person name="Jiang S.Q."/>
            <person name="Yu G.Q."/>
            <person name="Li Z.G."/>
            <person name="Hong J.-S."/>
        </authorList>
    </citation>
    <scope>CHARACTERIZATION</scope>
    <source>
        <strain>LT2</strain>
    </source>
</reference>
<dbReference type="EMBL" id="M21279">
    <property type="protein sequence ID" value="AAA68214.1"/>
    <property type="status" value="ALT_FRAME"/>
    <property type="molecule type" value="Genomic_DNA"/>
</dbReference>
<dbReference type="EMBL" id="AE006468">
    <property type="protein sequence ID" value="AAL21298.1"/>
    <property type="molecule type" value="Genomic_DNA"/>
</dbReference>
<dbReference type="RefSeq" id="NP_461339.1">
    <property type="nucleotide sequence ID" value="NC_003197.2"/>
</dbReference>
<dbReference type="RefSeq" id="WP_000467983.1">
    <property type="nucleotide sequence ID" value="NC_003197.2"/>
</dbReference>
<dbReference type="STRING" id="99287.STM2398"/>
<dbReference type="PaxDb" id="99287-STM2398"/>
<dbReference type="GeneID" id="1253920"/>
<dbReference type="KEGG" id="stm:STM2398"/>
<dbReference type="PATRIC" id="fig|99287.12.peg.2536"/>
<dbReference type="HOGENOM" id="CLU_040513_1_0_6"/>
<dbReference type="PhylomeDB" id="P0A233"/>
<dbReference type="BioCyc" id="SENT99287:STM2398-MONOMER"/>
<dbReference type="Proteomes" id="UP000001014">
    <property type="component" value="Chromosome"/>
</dbReference>
<dbReference type="GO" id="GO:0005886">
    <property type="term" value="C:plasma membrane"/>
    <property type="evidence" value="ECO:0007669"/>
    <property type="project" value="UniProtKB-SubCell"/>
</dbReference>
<dbReference type="Gene3D" id="3.40.190.10">
    <property type="entry name" value="Periplasmic binding protein-like II"/>
    <property type="match status" value="2"/>
</dbReference>
<dbReference type="PANTHER" id="PTHR30006:SF25">
    <property type="entry name" value="PHOSPHOGLYCERATE TRANSPORT REGULATORY PROTEIN PGTC"/>
    <property type="match status" value="1"/>
</dbReference>
<dbReference type="PANTHER" id="PTHR30006">
    <property type="entry name" value="THIAMINE-BINDING PERIPLASMIC PROTEIN-RELATED"/>
    <property type="match status" value="1"/>
</dbReference>
<dbReference type="Pfam" id="PF13343">
    <property type="entry name" value="SBP_bac_6"/>
    <property type="match status" value="1"/>
</dbReference>
<dbReference type="SUPFAM" id="SSF53850">
    <property type="entry name" value="Periplasmic binding protein-like II"/>
    <property type="match status" value="1"/>
</dbReference>